<accession>A9MRK3</accession>
<sequence>MSHTIRDKQKLKARTSKIQGQVIALKKMLDEPHECAAVLQQIAAIRGAVNGLMREVIKGHLTEHIVHQGDEARREEDLDVILKVLDSYIK</sequence>
<keyword id="KW-0963">Cytoplasm</keyword>
<keyword id="KW-0238">DNA-binding</keyword>
<keyword id="KW-1185">Reference proteome</keyword>
<keyword id="KW-0678">Repressor</keyword>
<keyword id="KW-0804">Transcription</keyword>
<keyword id="KW-0805">Transcription regulation</keyword>
<name>RCNR_SALAR</name>
<proteinExistence type="inferred from homology"/>
<organism>
    <name type="scientific">Salmonella arizonae (strain ATCC BAA-731 / CDC346-86 / RSK2980)</name>
    <dbReference type="NCBI Taxonomy" id="41514"/>
    <lineage>
        <taxon>Bacteria</taxon>
        <taxon>Pseudomonadati</taxon>
        <taxon>Pseudomonadota</taxon>
        <taxon>Gammaproteobacteria</taxon>
        <taxon>Enterobacterales</taxon>
        <taxon>Enterobacteriaceae</taxon>
        <taxon>Salmonella</taxon>
    </lineage>
</organism>
<evidence type="ECO:0000250" key="1"/>
<evidence type="ECO:0000305" key="2"/>
<protein>
    <recommendedName>
        <fullName>Transcriptional repressor RcnR</fullName>
    </recommendedName>
</protein>
<dbReference type="EMBL" id="CP000880">
    <property type="protein sequence ID" value="ABX24401.1"/>
    <property type="molecule type" value="Genomic_DNA"/>
</dbReference>
<dbReference type="SMR" id="A9MRK3"/>
<dbReference type="STRING" id="41514.SARI_04630"/>
<dbReference type="KEGG" id="ses:SARI_04630"/>
<dbReference type="HOGENOM" id="CLU_130332_3_0_6"/>
<dbReference type="Proteomes" id="UP000002084">
    <property type="component" value="Chromosome"/>
</dbReference>
<dbReference type="GO" id="GO:0005737">
    <property type="term" value="C:cytoplasm"/>
    <property type="evidence" value="ECO:0007669"/>
    <property type="project" value="UniProtKB-SubCell"/>
</dbReference>
<dbReference type="GO" id="GO:0003677">
    <property type="term" value="F:DNA binding"/>
    <property type="evidence" value="ECO:0007669"/>
    <property type="project" value="UniProtKB-KW"/>
</dbReference>
<dbReference type="GO" id="GO:0046872">
    <property type="term" value="F:metal ion binding"/>
    <property type="evidence" value="ECO:0007669"/>
    <property type="project" value="InterPro"/>
</dbReference>
<dbReference type="GO" id="GO:0045892">
    <property type="term" value="P:negative regulation of DNA-templated transcription"/>
    <property type="evidence" value="ECO:0007669"/>
    <property type="project" value="UniProtKB-ARBA"/>
</dbReference>
<dbReference type="CDD" id="cd10153">
    <property type="entry name" value="RcnR-FrmR-like_DUF156"/>
    <property type="match status" value="1"/>
</dbReference>
<dbReference type="FunFam" id="1.20.58.1000:FF:000001">
    <property type="entry name" value="Transcriptional repressor RcnR"/>
    <property type="match status" value="1"/>
</dbReference>
<dbReference type="Gene3D" id="1.20.58.1000">
    <property type="entry name" value="Metal-sensitive repressor, helix protomer"/>
    <property type="match status" value="1"/>
</dbReference>
<dbReference type="InterPro" id="IPR003735">
    <property type="entry name" value="Metal_Tscrpt_repr"/>
</dbReference>
<dbReference type="InterPro" id="IPR038390">
    <property type="entry name" value="Metal_Tscrpt_repr_sf"/>
</dbReference>
<dbReference type="NCBIfam" id="NF011613">
    <property type="entry name" value="PRK15039.1"/>
    <property type="match status" value="1"/>
</dbReference>
<dbReference type="PANTHER" id="PTHR33677">
    <property type="entry name" value="TRANSCRIPTIONAL REPRESSOR FRMR-RELATED"/>
    <property type="match status" value="1"/>
</dbReference>
<dbReference type="PANTHER" id="PTHR33677:SF1">
    <property type="entry name" value="TRANSCRIPTIONAL REPRESSOR RCNR"/>
    <property type="match status" value="1"/>
</dbReference>
<dbReference type="Pfam" id="PF02583">
    <property type="entry name" value="Trns_repr_metal"/>
    <property type="match status" value="1"/>
</dbReference>
<gene>
    <name type="primary">rcnR</name>
    <name type="ordered locus">SARI_04630</name>
</gene>
<feature type="chain" id="PRO_0000332698" description="Transcriptional repressor RcnR">
    <location>
        <begin position="1"/>
        <end position="90"/>
    </location>
</feature>
<comment type="function">
    <text evidence="1">Repressor of rcnA expression. Acts by binding specifically to the rcnA promoter in the absence of nickel and cobalt. In the presence of one of these metals, it has a weaker affinity for rcnA promoter (By similarity).</text>
</comment>
<comment type="subcellular location">
    <subcellularLocation>
        <location evidence="2">Cytoplasm</location>
    </subcellularLocation>
</comment>
<comment type="similarity">
    <text evidence="2">Belongs to the FrmR/RcnR family.</text>
</comment>
<reference key="1">
    <citation type="submission" date="2007-11" db="EMBL/GenBank/DDBJ databases">
        <authorList>
            <consortium name="The Salmonella enterica serovar Arizonae Genome Sequencing Project"/>
            <person name="McClelland M."/>
            <person name="Sanderson E.K."/>
            <person name="Porwollik S."/>
            <person name="Spieth J."/>
            <person name="Clifton W.S."/>
            <person name="Fulton R."/>
            <person name="Chunyan W."/>
            <person name="Wollam A."/>
            <person name="Shah N."/>
            <person name="Pepin K."/>
            <person name="Bhonagiri V."/>
            <person name="Nash W."/>
            <person name="Johnson M."/>
            <person name="Thiruvilangam P."/>
            <person name="Wilson R."/>
        </authorList>
    </citation>
    <scope>NUCLEOTIDE SEQUENCE [LARGE SCALE GENOMIC DNA]</scope>
    <source>
        <strain>ATCC BAA-731 / CDC346-86 / RSK2980</strain>
    </source>
</reference>